<protein>
    <recommendedName>
        <fullName>Homeobox protein Hox-A4</fullName>
    </recommendedName>
    <alternativeName>
        <fullName>LsHox 4</fullName>
    </alternativeName>
</protein>
<accession>P81192</accession>
<keyword id="KW-0217">Developmental protein</keyword>
<keyword id="KW-0238">DNA-binding</keyword>
<keyword id="KW-0371">Homeobox</keyword>
<keyword id="KW-0539">Nucleus</keyword>
<keyword id="KW-0804">Transcription</keyword>
<keyword id="KW-0805">Transcription regulation</keyword>
<feature type="chain" id="PRO_0000200056" description="Homeobox protein Hox-A4">
    <location>
        <begin position="1" status="less than"/>
        <end position="80" status="greater than"/>
    </location>
</feature>
<feature type="DNA-binding region" description="Homeobox" evidence="2">
    <location>
        <begin position="21"/>
        <end position="80"/>
    </location>
</feature>
<feature type="non-terminal residue">
    <location>
        <position position="1"/>
    </location>
</feature>
<feature type="non-terminal residue">
    <location>
        <position position="80"/>
    </location>
</feature>
<evidence type="ECO:0000250" key="1"/>
<evidence type="ECO:0000255" key="2">
    <source>
        <dbReference type="PROSITE-ProRule" id="PRU00108"/>
    </source>
</evidence>
<evidence type="ECO:0000305" key="3"/>
<comment type="function">
    <text evidence="1">Sequence-specific transcription factor which is part of a developmental regulatory system that provides cells with specific positional identities on the anterior-posterior axis.</text>
</comment>
<comment type="subcellular location">
    <subcellularLocation>
        <location evidence="2">Nucleus</location>
    </subcellularLocation>
</comment>
<comment type="similarity">
    <text evidence="3">Belongs to the Antp homeobox family. Deformed subfamily.</text>
</comment>
<sequence>AANGNFNGSESKRSRTAYTRHQILELEKEFHFNRYLTRRRRIEIAHALDLSERQIKIWFQNRRMKWKKEHKLPNTKLRLP</sequence>
<name>HXA4_LINSA</name>
<dbReference type="SMR" id="P81192"/>
<dbReference type="GO" id="GO:0005654">
    <property type="term" value="C:nucleoplasm"/>
    <property type="evidence" value="ECO:0007669"/>
    <property type="project" value="TreeGrafter"/>
</dbReference>
<dbReference type="GO" id="GO:0000981">
    <property type="term" value="F:DNA-binding transcription factor activity, RNA polymerase II-specific"/>
    <property type="evidence" value="ECO:0007669"/>
    <property type="project" value="InterPro"/>
</dbReference>
<dbReference type="GO" id="GO:0000978">
    <property type="term" value="F:RNA polymerase II cis-regulatory region sequence-specific DNA binding"/>
    <property type="evidence" value="ECO:0007669"/>
    <property type="project" value="TreeGrafter"/>
</dbReference>
<dbReference type="GO" id="GO:0009952">
    <property type="term" value="P:anterior/posterior pattern specification"/>
    <property type="evidence" value="ECO:0007669"/>
    <property type="project" value="TreeGrafter"/>
</dbReference>
<dbReference type="GO" id="GO:0045944">
    <property type="term" value="P:positive regulation of transcription by RNA polymerase II"/>
    <property type="evidence" value="ECO:0007669"/>
    <property type="project" value="TreeGrafter"/>
</dbReference>
<dbReference type="CDD" id="cd00086">
    <property type="entry name" value="homeodomain"/>
    <property type="match status" value="1"/>
</dbReference>
<dbReference type="FunFam" id="1.10.10.60:FF:000176">
    <property type="entry name" value="pancreas/duodenum homeobox protein 1"/>
    <property type="match status" value="1"/>
</dbReference>
<dbReference type="Gene3D" id="1.10.10.60">
    <property type="entry name" value="Homeodomain-like"/>
    <property type="match status" value="1"/>
</dbReference>
<dbReference type="InterPro" id="IPR050609">
    <property type="entry name" value="Antp_homeobox_Deformed_sf"/>
</dbReference>
<dbReference type="InterPro" id="IPR001356">
    <property type="entry name" value="HD"/>
</dbReference>
<dbReference type="InterPro" id="IPR020479">
    <property type="entry name" value="HD_metazoa"/>
</dbReference>
<dbReference type="InterPro" id="IPR017970">
    <property type="entry name" value="Homeobox_CS"/>
</dbReference>
<dbReference type="InterPro" id="IPR009057">
    <property type="entry name" value="Homeodomain-like_sf"/>
</dbReference>
<dbReference type="PANTHER" id="PTHR45771">
    <property type="entry name" value="HOMEOTIC PROTEIN DEFORMED"/>
    <property type="match status" value="1"/>
</dbReference>
<dbReference type="PANTHER" id="PTHR45771:SF6">
    <property type="entry name" value="HOMEOTIC PROTEIN SEX COMBS REDUCED"/>
    <property type="match status" value="1"/>
</dbReference>
<dbReference type="Pfam" id="PF00046">
    <property type="entry name" value="Homeodomain"/>
    <property type="match status" value="1"/>
</dbReference>
<dbReference type="PRINTS" id="PR00024">
    <property type="entry name" value="HOMEOBOX"/>
</dbReference>
<dbReference type="SMART" id="SM00389">
    <property type="entry name" value="HOX"/>
    <property type="match status" value="1"/>
</dbReference>
<dbReference type="SUPFAM" id="SSF46689">
    <property type="entry name" value="Homeodomain-like"/>
    <property type="match status" value="1"/>
</dbReference>
<dbReference type="PROSITE" id="PS00027">
    <property type="entry name" value="HOMEOBOX_1"/>
    <property type="match status" value="1"/>
</dbReference>
<dbReference type="PROSITE" id="PS50071">
    <property type="entry name" value="HOMEOBOX_2"/>
    <property type="match status" value="1"/>
</dbReference>
<gene>
    <name type="primary">HOXA4</name>
</gene>
<proteinExistence type="inferred from homology"/>
<reference key="1">
    <citation type="journal article" date="1998" name="Proc. Natl. Acad. Sci. U.S.A.">
        <title>Homeobox genes in the ribbonworm Lineus sanguineus: evolutionary implications.</title>
        <authorList>
            <person name="Kmita-Cunisse M."/>
            <person name="Loosli F."/>
            <person name="Bierne J."/>
            <person name="Gehring W.J."/>
        </authorList>
    </citation>
    <scope>NUCLEOTIDE SEQUENCE</scope>
</reference>
<organism>
    <name type="scientific">Lineus sanguineus</name>
    <name type="common">Ribbon worm</name>
    <dbReference type="NCBI Taxonomy" id="187800"/>
    <lineage>
        <taxon>Eukaryota</taxon>
        <taxon>Metazoa</taxon>
        <taxon>Spiralia</taxon>
        <taxon>Lophotrochozoa</taxon>
        <taxon>Nemertea</taxon>
        <taxon>Pilidiophora</taxon>
        <taxon>Heteronemertea</taxon>
        <taxon>Lineidae</taxon>
        <taxon>Lineus</taxon>
    </lineage>
</organism>